<gene>
    <name evidence="1" type="primary">atpA</name>
    <name type="ordered locus">PSEEN5544</name>
</gene>
<sequence>MQQLNPSEISEIIKGRIEKLDVSSQARNEGTVVSVSDGIVRIHGLADVMYGEMIEFPGSVFGMALNLEQDSVGAVVLGDYTSLAEGMSAKCTGRILEVPVGKELLGRVVDALGNPIDGKGPLNNTETDAVEKVAPGVIWRKSVDQPVQTGYKSVDAMIPVGRGQRELIIGDRQIGKTAMAVDAIINQKNSGIFCVYVAVGQKQSTIANVVRKLEEAGALANTIVVAASASESAALQFLAPYAGCTMGEFFRDRGEDALIVYDDLSKQAVAYRQISLLLRRPPGREAYPGDVFYLHSRLLERASRVSEEYVEKFTNGAVTGKTGSLTALPIIETQAGDVSAFVPTNVISITDGQIFLESAMFNAGIRPAVNAGVSVSRVGGAAQTKIIKKLSGGIRTALAQYRELAAFAQFASDLDEATRKQLEHGQRVTELMKQKQYAPMSIADMALSLYAAERGFLTDVEVAKVGSFEQALIAYFNRDHAELMAKINVKGDFNDEIDAGMKAGIEKFKATQTW</sequence>
<name>ATPA_PSEE4</name>
<feature type="chain" id="PRO_0000302690" description="ATP synthase subunit alpha">
    <location>
        <begin position="1"/>
        <end position="514"/>
    </location>
</feature>
<feature type="binding site" evidence="1">
    <location>
        <begin position="170"/>
        <end position="177"/>
    </location>
    <ligand>
        <name>ATP</name>
        <dbReference type="ChEBI" id="CHEBI:30616"/>
    </ligand>
</feature>
<feature type="site" description="Required for activity" evidence="1">
    <location>
        <position position="374"/>
    </location>
</feature>
<organism>
    <name type="scientific">Pseudomonas entomophila (strain L48)</name>
    <dbReference type="NCBI Taxonomy" id="384676"/>
    <lineage>
        <taxon>Bacteria</taxon>
        <taxon>Pseudomonadati</taxon>
        <taxon>Pseudomonadota</taxon>
        <taxon>Gammaproteobacteria</taxon>
        <taxon>Pseudomonadales</taxon>
        <taxon>Pseudomonadaceae</taxon>
        <taxon>Pseudomonas</taxon>
    </lineage>
</organism>
<dbReference type="EC" id="7.1.2.2" evidence="1"/>
<dbReference type="EMBL" id="CT573326">
    <property type="protein sequence ID" value="CAK18151.1"/>
    <property type="molecule type" value="Genomic_DNA"/>
</dbReference>
<dbReference type="RefSeq" id="WP_011536503.1">
    <property type="nucleotide sequence ID" value="NC_008027.1"/>
</dbReference>
<dbReference type="SMR" id="Q1I2I5"/>
<dbReference type="STRING" id="384676.PSEEN5544"/>
<dbReference type="GeneID" id="32808443"/>
<dbReference type="KEGG" id="pen:PSEEN5544"/>
<dbReference type="eggNOG" id="COG0056">
    <property type="taxonomic scope" value="Bacteria"/>
</dbReference>
<dbReference type="HOGENOM" id="CLU_010091_2_1_6"/>
<dbReference type="OrthoDB" id="9803053at2"/>
<dbReference type="Proteomes" id="UP000000658">
    <property type="component" value="Chromosome"/>
</dbReference>
<dbReference type="GO" id="GO:0005886">
    <property type="term" value="C:plasma membrane"/>
    <property type="evidence" value="ECO:0007669"/>
    <property type="project" value="UniProtKB-SubCell"/>
</dbReference>
<dbReference type="GO" id="GO:0045259">
    <property type="term" value="C:proton-transporting ATP synthase complex"/>
    <property type="evidence" value="ECO:0007669"/>
    <property type="project" value="UniProtKB-KW"/>
</dbReference>
<dbReference type="GO" id="GO:0043531">
    <property type="term" value="F:ADP binding"/>
    <property type="evidence" value="ECO:0007669"/>
    <property type="project" value="TreeGrafter"/>
</dbReference>
<dbReference type="GO" id="GO:0005524">
    <property type="term" value="F:ATP binding"/>
    <property type="evidence" value="ECO:0007669"/>
    <property type="project" value="UniProtKB-UniRule"/>
</dbReference>
<dbReference type="GO" id="GO:0046933">
    <property type="term" value="F:proton-transporting ATP synthase activity, rotational mechanism"/>
    <property type="evidence" value="ECO:0007669"/>
    <property type="project" value="UniProtKB-UniRule"/>
</dbReference>
<dbReference type="CDD" id="cd18113">
    <property type="entry name" value="ATP-synt_F1_alpha_C"/>
    <property type="match status" value="1"/>
</dbReference>
<dbReference type="CDD" id="cd18116">
    <property type="entry name" value="ATP-synt_F1_alpha_N"/>
    <property type="match status" value="1"/>
</dbReference>
<dbReference type="CDD" id="cd01132">
    <property type="entry name" value="F1-ATPase_alpha_CD"/>
    <property type="match status" value="1"/>
</dbReference>
<dbReference type="FunFam" id="1.20.150.20:FF:000001">
    <property type="entry name" value="ATP synthase subunit alpha"/>
    <property type="match status" value="1"/>
</dbReference>
<dbReference type="FunFam" id="2.40.30.20:FF:000001">
    <property type="entry name" value="ATP synthase subunit alpha"/>
    <property type="match status" value="1"/>
</dbReference>
<dbReference type="FunFam" id="3.40.50.300:FF:000002">
    <property type="entry name" value="ATP synthase subunit alpha"/>
    <property type="match status" value="1"/>
</dbReference>
<dbReference type="Gene3D" id="2.40.30.20">
    <property type="match status" value="1"/>
</dbReference>
<dbReference type="Gene3D" id="1.20.150.20">
    <property type="entry name" value="ATP synthase alpha/beta chain, C-terminal domain"/>
    <property type="match status" value="1"/>
</dbReference>
<dbReference type="Gene3D" id="3.40.50.300">
    <property type="entry name" value="P-loop containing nucleotide triphosphate hydrolases"/>
    <property type="match status" value="1"/>
</dbReference>
<dbReference type="HAMAP" id="MF_01346">
    <property type="entry name" value="ATP_synth_alpha_bact"/>
    <property type="match status" value="1"/>
</dbReference>
<dbReference type="InterPro" id="IPR023366">
    <property type="entry name" value="ATP_synth_asu-like_sf"/>
</dbReference>
<dbReference type="InterPro" id="IPR000793">
    <property type="entry name" value="ATP_synth_asu_C"/>
</dbReference>
<dbReference type="InterPro" id="IPR038376">
    <property type="entry name" value="ATP_synth_asu_C_sf"/>
</dbReference>
<dbReference type="InterPro" id="IPR033732">
    <property type="entry name" value="ATP_synth_F1_a_nt-bd_dom"/>
</dbReference>
<dbReference type="InterPro" id="IPR005294">
    <property type="entry name" value="ATP_synth_F1_asu"/>
</dbReference>
<dbReference type="InterPro" id="IPR020003">
    <property type="entry name" value="ATPase_a/bsu_AS"/>
</dbReference>
<dbReference type="InterPro" id="IPR004100">
    <property type="entry name" value="ATPase_F1/V1/A1_a/bsu_N"/>
</dbReference>
<dbReference type="InterPro" id="IPR036121">
    <property type="entry name" value="ATPase_F1/V1/A1_a/bsu_N_sf"/>
</dbReference>
<dbReference type="InterPro" id="IPR000194">
    <property type="entry name" value="ATPase_F1/V1/A1_a/bsu_nucl-bd"/>
</dbReference>
<dbReference type="InterPro" id="IPR027417">
    <property type="entry name" value="P-loop_NTPase"/>
</dbReference>
<dbReference type="NCBIfam" id="TIGR00962">
    <property type="entry name" value="atpA"/>
    <property type="match status" value="1"/>
</dbReference>
<dbReference type="NCBIfam" id="NF009884">
    <property type="entry name" value="PRK13343.1"/>
    <property type="match status" value="1"/>
</dbReference>
<dbReference type="PANTHER" id="PTHR48082">
    <property type="entry name" value="ATP SYNTHASE SUBUNIT ALPHA, MITOCHONDRIAL"/>
    <property type="match status" value="1"/>
</dbReference>
<dbReference type="PANTHER" id="PTHR48082:SF2">
    <property type="entry name" value="ATP SYNTHASE SUBUNIT ALPHA, MITOCHONDRIAL"/>
    <property type="match status" value="1"/>
</dbReference>
<dbReference type="Pfam" id="PF00006">
    <property type="entry name" value="ATP-synt_ab"/>
    <property type="match status" value="1"/>
</dbReference>
<dbReference type="Pfam" id="PF00306">
    <property type="entry name" value="ATP-synt_ab_C"/>
    <property type="match status" value="1"/>
</dbReference>
<dbReference type="Pfam" id="PF02874">
    <property type="entry name" value="ATP-synt_ab_N"/>
    <property type="match status" value="1"/>
</dbReference>
<dbReference type="PIRSF" id="PIRSF039088">
    <property type="entry name" value="F_ATPase_subunit_alpha"/>
    <property type="match status" value="1"/>
</dbReference>
<dbReference type="SUPFAM" id="SSF47917">
    <property type="entry name" value="C-terminal domain of alpha and beta subunits of F1 ATP synthase"/>
    <property type="match status" value="1"/>
</dbReference>
<dbReference type="SUPFAM" id="SSF50615">
    <property type="entry name" value="N-terminal domain of alpha and beta subunits of F1 ATP synthase"/>
    <property type="match status" value="1"/>
</dbReference>
<dbReference type="SUPFAM" id="SSF52540">
    <property type="entry name" value="P-loop containing nucleoside triphosphate hydrolases"/>
    <property type="match status" value="1"/>
</dbReference>
<dbReference type="PROSITE" id="PS00152">
    <property type="entry name" value="ATPASE_ALPHA_BETA"/>
    <property type="match status" value="1"/>
</dbReference>
<proteinExistence type="inferred from homology"/>
<protein>
    <recommendedName>
        <fullName evidence="1">ATP synthase subunit alpha</fullName>
        <ecNumber evidence="1">7.1.2.2</ecNumber>
    </recommendedName>
    <alternativeName>
        <fullName evidence="1">ATP synthase F1 sector subunit alpha</fullName>
    </alternativeName>
    <alternativeName>
        <fullName evidence="1">F-ATPase subunit alpha</fullName>
    </alternativeName>
</protein>
<comment type="function">
    <text evidence="1">Produces ATP from ADP in the presence of a proton gradient across the membrane. The alpha chain is a regulatory subunit.</text>
</comment>
<comment type="catalytic activity">
    <reaction evidence="1">
        <text>ATP + H2O + 4 H(+)(in) = ADP + phosphate + 5 H(+)(out)</text>
        <dbReference type="Rhea" id="RHEA:57720"/>
        <dbReference type="ChEBI" id="CHEBI:15377"/>
        <dbReference type="ChEBI" id="CHEBI:15378"/>
        <dbReference type="ChEBI" id="CHEBI:30616"/>
        <dbReference type="ChEBI" id="CHEBI:43474"/>
        <dbReference type="ChEBI" id="CHEBI:456216"/>
        <dbReference type="EC" id="7.1.2.2"/>
    </reaction>
</comment>
<comment type="subunit">
    <text evidence="1">F-type ATPases have 2 components, CF(1) - the catalytic core - and CF(0) - the membrane proton channel. CF(1) has five subunits: alpha(3), beta(3), gamma(1), delta(1), epsilon(1). CF(0) has three main subunits: a(1), b(2) and c(9-12). The alpha and beta chains form an alternating ring which encloses part of the gamma chain. CF(1) is attached to CF(0) by a central stalk formed by the gamma and epsilon chains, while a peripheral stalk is formed by the delta and b chains.</text>
</comment>
<comment type="subcellular location">
    <subcellularLocation>
        <location evidence="1">Cell inner membrane</location>
        <topology evidence="1">Peripheral membrane protein</topology>
    </subcellularLocation>
</comment>
<comment type="similarity">
    <text evidence="1">Belongs to the ATPase alpha/beta chains family.</text>
</comment>
<reference key="1">
    <citation type="journal article" date="2006" name="Nat. Biotechnol.">
        <title>Complete genome sequence of the entomopathogenic and metabolically versatile soil bacterium Pseudomonas entomophila.</title>
        <authorList>
            <person name="Vodovar N."/>
            <person name="Vallenet D."/>
            <person name="Cruveiller S."/>
            <person name="Rouy Z."/>
            <person name="Barbe V."/>
            <person name="Acosta C."/>
            <person name="Cattolico L."/>
            <person name="Jubin C."/>
            <person name="Lajus A."/>
            <person name="Segurens B."/>
            <person name="Vacherie B."/>
            <person name="Wincker P."/>
            <person name="Weissenbach J."/>
            <person name="Lemaitre B."/>
            <person name="Medigue C."/>
            <person name="Boccard F."/>
        </authorList>
    </citation>
    <scope>NUCLEOTIDE SEQUENCE [LARGE SCALE GENOMIC DNA]</scope>
    <source>
        <strain>L48</strain>
    </source>
</reference>
<keyword id="KW-0066">ATP synthesis</keyword>
<keyword id="KW-0067">ATP-binding</keyword>
<keyword id="KW-0997">Cell inner membrane</keyword>
<keyword id="KW-1003">Cell membrane</keyword>
<keyword id="KW-0139">CF(1)</keyword>
<keyword id="KW-0375">Hydrogen ion transport</keyword>
<keyword id="KW-0406">Ion transport</keyword>
<keyword id="KW-0472">Membrane</keyword>
<keyword id="KW-0547">Nucleotide-binding</keyword>
<keyword id="KW-1278">Translocase</keyword>
<keyword id="KW-0813">Transport</keyword>
<accession>Q1I2I5</accession>
<evidence type="ECO:0000255" key="1">
    <source>
        <dbReference type="HAMAP-Rule" id="MF_01346"/>
    </source>
</evidence>